<proteinExistence type="inferred from homology"/>
<evidence type="ECO:0000255" key="1">
    <source>
        <dbReference type="HAMAP-Rule" id="MF_01007"/>
    </source>
</evidence>
<name>RSMH_DEHM1</name>
<comment type="function">
    <text evidence="1">Specifically methylates the N4 position of cytidine in position 1402 (C1402) of 16S rRNA.</text>
</comment>
<comment type="catalytic activity">
    <reaction evidence="1">
        <text>cytidine(1402) in 16S rRNA + S-adenosyl-L-methionine = N(4)-methylcytidine(1402) in 16S rRNA + S-adenosyl-L-homocysteine + H(+)</text>
        <dbReference type="Rhea" id="RHEA:42928"/>
        <dbReference type="Rhea" id="RHEA-COMP:10286"/>
        <dbReference type="Rhea" id="RHEA-COMP:10287"/>
        <dbReference type="ChEBI" id="CHEBI:15378"/>
        <dbReference type="ChEBI" id="CHEBI:57856"/>
        <dbReference type="ChEBI" id="CHEBI:59789"/>
        <dbReference type="ChEBI" id="CHEBI:74506"/>
        <dbReference type="ChEBI" id="CHEBI:82748"/>
        <dbReference type="EC" id="2.1.1.199"/>
    </reaction>
</comment>
<comment type="subcellular location">
    <subcellularLocation>
        <location evidence="1">Cytoplasm</location>
    </subcellularLocation>
</comment>
<comment type="similarity">
    <text evidence="1">Belongs to the methyltransferase superfamily. RsmH family.</text>
</comment>
<feature type="chain" id="PRO_0000223540" description="Ribosomal RNA small subunit methyltransferase H">
    <location>
        <begin position="1"/>
        <end position="349"/>
    </location>
</feature>
<feature type="binding site" evidence="1">
    <location>
        <begin position="34"/>
        <end position="36"/>
    </location>
    <ligand>
        <name>S-adenosyl-L-methionine</name>
        <dbReference type="ChEBI" id="CHEBI:59789"/>
    </ligand>
</feature>
<feature type="binding site" evidence="1">
    <location>
        <position position="54"/>
    </location>
    <ligand>
        <name>S-adenosyl-L-methionine</name>
        <dbReference type="ChEBI" id="CHEBI:59789"/>
    </ligand>
</feature>
<feature type="binding site" evidence="1">
    <location>
        <position position="81"/>
    </location>
    <ligand>
        <name>S-adenosyl-L-methionine</name>
        <dbReference type="ChEBI" id="CHEBI:59789"/>
    </ligand>
</feature>
<feature type="binding site" evidence="1">
    <location>
        <position position="102"/>
    </location>
    <ligand>
        <name>S-adenosyl-L-methionine</name>
        <dbReference type="ChEBI" id="CHEBI:59789"/>
    </ligand>
</feature>
<feature type="binding site" evidence="1">
    <location>
        <position position="109"/>
    </location>
    <ligand>
        <name>S-adenosyl-L-methionine</name>
        <dbReference type="ChEBI" id="CHEBI:59789"/>
    </ligand>
</feature>
<protein>
    <recommendedName>
        <fullName evidence="1">Ribosomal RNA small subunit methyltransferase H</fullName>
        <ecNumber evidence="1">2.1.1.199</ecNumber>
    </recommendedName>
    <alternativeName>
        <fullName evidence="1">16S rRNA m(4)C1402 methyltransferase</fullName>
    </alternativeName>
    <alternativeName>
        <fullName evidence="1">rRNA (cytosine-N(4)-)-methyltransferase RsmH</fullName>
    </alternativeName>
</protein>
<sequence length="349" mass="38574">MTEYPHIPVMLEESIQGLGVIPGGRYVDCTLGAGGHSEAILEHSYPGGQLLSIDADPKAIALAAERLKCFGSSVLLVNDNFANLKDICQRYEYMPVHGILFDLGLSSMQLDREESGFSFQTEAPLDMRFSPGQELSAADIVNTYDLAGLSDLIWKYGEEPFSRRIARAILEKRPFKTTTELASVIEKAVGGRHGRIHPATRTFQALRIAVNEELSHLESALAQAQSLLGHGGRLVVISYHSLEDRIVKQYFQKEAKGCICPDDIPQCVCNHKPSLRLINRRVITPSDEEISRNPRSRSAKMRVAERIIQPGEGRFFHSRAKGLVNHVSETGSVRYGQAKHKGVVQRGGS</sequence>
<reference key="1">
    <citation type="journal article" date="2005" name="Science">
        <title>Genome sequence of the PCE-dechlorinating bacterium Dehalococcoides ethenogenes.</title>
        <authorList>
            <person name="Seshadri R."/>
            <person name="Adrian L."/>
            <person name="Fouts D.E."/>
            <person name="Eisen J.A."/>
            <person name="Phillippy A.M."/>
            <person name="Methe B.A."/>
            <person name="Ward N.L."/>
            <person name="Nelson W.C."/>
            <person name="DeBoy R.T."/>
            <person name="Khouri H.M."/>
            <person name="Kolonay J.F."/>
            <person name="Dodson R.J."/>
            <person name="Daugherty S.C."/>
            <person name="Brinkac L.M."/>
            <person name="Sullivan S.A."/>
            <person name="Madupu R."/>
            <person name="Nelson K.E."/>
            <person name="Kang K.H."/>
            <person name="Impraim M."/>
            <person name="Tran K."/>
            <person name="Robinson J.M."/>
            <person name="Forberger H.A."/>
            <person name="Fraser C.M."/>
            <person name="Zinder S.H."/>
            <person name="Heidelberg J.F."/>
        </authorList>
    </citation>
    <scope>NUCLEOTIDE SEQUENCE [LARGE SCALE GENOMIC DNA]</scope>
    <source>
        <strain>ATCC BAA-2266 / KCTC 15142 / 195</strain>
    </source>
</reference>
<dbReference type="EC" id="2.1.1.199" evidence="1"/>
<dbReference type="EMBL" id="CP000027">
    <property type="protein sequence ID" value="AAW40414.1"/>
    <property type="molecule type" value="Genomic_DNA"/>
</dbReference>
<dbReference type="RefSeq" id="WP_010936121.1">
    <property type="nucleotide sequence ID" value="NC_002936.3"/>
</dbReference>
<dbReference type="SMR" id="Q3Z9L1"/>
<dbReference type="FunCoup" id="Q3Z9L1">
    <property type="interactions" value="303"/>
</dbReference>
<dbReference type="STRING" id="243164.DET0341"/>
<dbReference type="GeneID" id="3230378"/>
<dbReference type="KEGG" id="det:DET0341"/>
<dbReference type="PATRIC" id="fig|243164.10.peg.321"/>
<dbReference type="eggNOG" id="COG0275">
    <property type="taxonomic scope" value="Bacteria"/>
</dbReference>
<dbReference type="HOGENOM" id="CLU_038422_3_0_0"/>
<dbReference type="InParanoid" id="Q3Z9L1"/>
<dbReference type="Proteomes" id="UP000008289">
    <property type="component" value="Chromosome"/>
</dbReference>
<dbReference type="GO" id="GO:0005737">
    <property type="term" value="C:cytoplasm"/>
    <property type="evidence" value="ECO:0007669"/>
    <property type="project" value="UniProtKB-SubCell"/>
</dbReference>
<dbReference type="GO" id="GO:0071424">
    <property type="term" value="F:rRNA (cytosine-N4-)-methyltransferase activity"/>
    <property type="evidence" value="ECO:0007669"/>
    <property type="project" value="UniProtKB-UniRule"/>
</dbReference>
<dbReference type="GO" id="GO:0070475">
    <property type="term" value="P:rRNA base methylation"/>
    <property type="evidence" value="ECO:0007669"/>
    <property type="project" value="UniProtKB-UniRule"/>
</dbReference>
<dbReference type="Gene3D" id="1.10.150.170">
    <property type="entry name" value="Putative methyltransferase TM0872, insert domain"/>
    <property type="match status" value="1"/>
</dbReference>
<dbReference type="Gene3D" id="3.40.50.150">
    <property type="entry name" value="Vaccinia Virus protein VP39"/>
    <property type="match status" value="1"/>
</dbReference>
<dbReference type="HAMAP" id="MF_01007">
    <property type="entry name" value="16SrRNA_methyltr_H"/>
    <property type="match status" value="1"/>
</dbReference>
<dbReference type="InterPro" id="IPR002903">
    <property type="entry name" value="RsmH"/>
</dbReference>
<dbReference type="InterPro" id="IPR023397">
    <property type="entry name" value="SAM-dep_MeTrfase_MraW_recog"/>
</dbReference>
<dbReference type="InterPro" id="IPR029063">
    <property type="entry name" value="SAM-dependent_MTases_sf"/>
</dbReference>
<dbReference type="NCBIfam" id="TIGR00006">
    <property type="entry name" value="16S rRNA (cytosine(1402)-N(4))-methyltransferase RsmH"/>
    <property type="match status" value="1"/>
</dbReference>
<dbReference type="PANTHER" id="PTHR11265:SF0">
    <property type="entry name" value="12S RRNA N4-METHYLCYTIDINE METHYLTRANSFERASE"/>
    <property type="match status" value="1"/>
</dbReference>
<dbReference type="PANTHER" id="PTHR11265">
    <property type="entry name" value="S-ADENOSYL-METHYLTRANSFERASE MRAW"/>
    <property type="match status" value="1"/>
</dbReference>
<dbReference type="Pfam" id="PF01795">
    <property type="entry name" value="Methyltransf_5"/>
    <property type="match status" value="1"/>
</dbReference>
<dbReference type="PIRSF" id="PIRSF004486">
    <property type="entry name" value="MraW"/>
    <property type="match status" value="1"/>
</dbReference>
<dbReference type="SUPFAM" id="SSF81799">
    <property type="entry name" value="Putative methyltransferase TM0872, insert domain"/>
    <property type="match status" value="1"/>
</dbReference>
<dbReference type="SUPFAM" id="SSF53335">
    <property type="entry name" value="S-adenosyl-L-methionine-dependent methyltransferases"/>
    <property type="match status" value="1"/>
</dbReference>
<organism>
    <name type="scientific">Dehalococcoides mccartyi (strain ATCC BAA-2266 / KCTC 15142 / 195)</name>
    <name type="common">Dehalococcoides ethenogenes (strain 195)</name>
    <dbReference type="NCBI Taxonomy" id="243164"/>
    <lineage>
        <taxon>Bacteria</taxon>
        <taxon>Bacillati</taxon>
        <taxon>Chloroflexota</taxon>
        <taxon>Dehalococcoidia</taxon>
        <taxon>Dehalococcoidales</taxon>
        <taxon>Dehalococcoidaceae</taxon>
        <taxon>Dehalococcoides</taxon>
    </lineage>
</organism>
<gene>
    <name evidence="1" type="primary">rsmH</name>
    <name type="synonym">mraW</name>
    <name type="ordered locus">DET0341</name>
</gene>
<keyword id="KW-0963">Cytoplasm</keyword>
<keyword id="KW-0489">Methyltransferase</keyword>
<keyword id="KW-0698">rRNA processing</keyword>
<keyword id="KW-0949">S-adenosyl-L-methionine</keyword>
<keyword id="KW-0808">Transferase</keyword>
<accession>Q3Z9L1</accession>